<protein>
    <recommendedName>
        <fullName evidence="1">Cytochrome b6-f complex subunit 5</fullName>
    </recommendedName>
    <alternativeName>
        <fullName evidence="1">Cytochrome b6-f complex subunit PetG</fullName>
    </alternativeName>
    <alternativeName>
        <fullName evidence="1">Cytochrome b6-f complex subunit V</fullName>
    </alternativeName>
</protein>
<accession>B0Z5E7</accession>
<geneLocation type="chloroplast"/>
<reference key="1">
    <citation type="journal article" date="2008" name="Nucleic Acids Res.">
        <title>The complete nucleotide sequences of the five genetically distinct plastid genomes of Oenothera, subsection Oenothera: I. Sequence evaluation and plastome evolution.</title>
        <authorList>
            <person name="Greiner S."/>
            <person name="Wang X."/>
            <person name="Rauwolf U."/>
            <person name="Silber M.V."/>
            <person name="Mayer K."/>
            <person name="Meurer J."/>
            <person name="Haberer G."/>
            <person name="Herrmann R.G."/>
        </authorList>
    </citation>
    <scope>NUCLEOTIDE SEQUENCE [LARGE SCALE GENOMIC DNA]</scope>
    <source>
        <strain>cv. Atrovirens</strain>
    </source>
</reference>
<proteinExistence type="inferred from homology"/>
<sequence>MIEVFLFGIVLGLIPITLAGLFVTAYLQYRRGDQLDL</sequence>
<comment type="function">
    <text evidence="1">Component of the cytochrome b6-f complex, which mediates electron transfer between photosystem II (PSII) and photosystem I (PSI), cyclic electron flow around PSI, and state transitions. PetG is required for either the stability or assembly of the cytochrome b6-f complex.</text>
</comment>
<comment type="subunit">
    <text evidence="1">The 4 large subunits of the cytochrome b6-f complex are cytochrome b6, subunit IV (17 kDa polypeptide, PetD), cytochrome f and the Rieske protein, while the 4 small subunits are PetG, PetL, PetM and PetN. The complex functions as a dimer.</text>
</comment>
<comment type="subcellular location">
    <subcellularLocation>
        <location evidence="1">Plastid</location>
        <location evidence="1">Chloroplast thylakoid membrane</location>
        <topology evidence="1">Single-pass membrane protein</topology>
    </subcellularLocation>
</comment>
<comment type="similarity">
    <text evidence="1">Belongs to the PetG family.</text>
</comment>
<keyword id="KW-0150">Chloroplast</keyword>
<keyword id="KW-0249">Electron transport</keyword>
<keyword id="KW-0472">Membrane</keyword>
<keyword id="KW-0602">Photosynthesis</keyword>
<keyword id="KW-0934">Plastid</keyword>
<keyword id="KW-0793">Thylakoid</keyword>
<keyword id="KW-0812">Transmembrane</keyword>
<keyword id="KW-1133">Transmembrane helix</keyword>
<keyword id="KW-0813">Transport</keyword>
<name>PETG_OENPA</name>
<gene>
    <name evidence="1" type="primary">petG</name>
</gene>
<organism>
    <name type="scientific">Oenothera parviflora</name>
    <name type="common">Small-flowered evening primrose</name>
    <name type="synonym">Oenothera cruciata</name>
    <dbReference type="NCBI Taxonomy" id="482429"/>
    <lineage>
        <taxon>Eukaryota</taxon>
        <taxon>Viridiplantae</taxon>
        <taxon>Streptophyta</taxon>
        <taxon>Embryophyta</taxon>
        <taxon>Tracheophyta</taxon>
        <taxon>Spermatophyta</taxon>
        <taxon>Magnoliopsida</taxon>
        <taxon>eudicotyledons</taxon>
        <taxon>Gunneridae</taxon>
        <taxon>Pentapetalae</taxon>
        <taxon>rosids</taxon>
        <taxon>malvids</taxon>
        <taxon>Myrtales</taxon>
        <taxon>Onagraceae</taxon>
        <taxon>Onagroideae</taxon>
        <taxon>Onagreae</taxon>
        <taxon>Oenothera</taxon>
    </lineage>
</organism>
<evidence type="ECO:0000255" key="1">
    <source>
        <dbReference type="HAMAP-Rule" id="MF_00432"/>
    </source>
</evidence>
<dbReference type="EMBL" id="EU262891">
    <property type="protein sequence ID" value="ABX10140.1"/>
    <property type="molecule type" value="Genomic_DNA"/>
</dbReference>
<dbReference type="RefSeq" id="YP_001687470.1">
    <property type="nucleotide sequence ID" value="NC_010362.1"/>
</dbReference>
<dbReference type="SMR" id="B0Z5E7"/>
<dbReference type="GeneID" id="5955404"/>
<dbReference type="GO" id="GO:0009535">
    <property type="term" value="C:chloroplast thylakoid membrane"/>
    <property type="evidence" value="ECO:0007669"/>
    <property type="project" value="UniProtKB-SubCell"/>
</dbReference>
<dbReference type="GO" id="GO:0009512">
    <property type="term" value="C:cytochrome b6f complex"/>
    <property type="evidence" value="ECO:0007669"/>
    <property type="project" value="InterPro"/>
</dbReference>
<dbReference type="GO" id="GO:0045158">
    <property type="term" value="F:electron transporter, transferring electrons within cytochrome b6/f complex of photosystem II activity"/>
    <property type="evidence" value="ECO:0007669"/>
    <property type="project" value="UniProtKB-UniRule"/>
</dbReference>
<dbReference type="GO" id="GO:0017004">
    <property type="term" value="P:cytochrome complex assembly"/>
    <property type="evidence" value="ECO:0007669"/>
    <property type="project" value="UniProtKB-UniRule"/>
</dbReference>
<dbReference type="GO" id="GO:0015979">
    <property type="term" value="P:photosynthesis"/>
    <property type="evidence" value="ECO:0007669"/>
    <property type="project" value="UniProtKB-KW"/>
</dbReference>
<dbReference type="HAMAP" id="MF_00432">
    <property type="entry name" value="Cytb6_f_PetG"/>
    <property type="match status" value="1"/>
</dbReference>
<dbReference type="InterPro" id="IPR003683">
    <property type="entry name" value="Cyt_6/f_cplx_su5"/>
</dbReference>
<dbReference type="InterPro" id="IPR036099">
    <property type="entry name" value="Cyt_6/f_cplx_su5_sf"/>
</dbReference>
<dbReference type="NCBIfam" id="NF001907">
    <property type="entry name" value="PRK00665.1"/>
    <property type="match status" value="1"/>
</dbReference>
<dbReference type="Pfam" id="PF02529">
    <property type="entry name" value="PetG"/>
    <property type="match status" value="1"/>
</dbReference>
<dbReference type="PIRSF" id="PIRSF000034">
    <property type="entry name" value="Cyt_b6-f_V"/>
    <property type="match status" value="1"/>
</dbReference>
<dbReference type="SUPFAM" id="SSF103446">
    <property type="entry name" value="PetG subunit of the cytochrome b6f complex"/>
    <property type="match status" value="1"/>
</dbReference>
<feature type="chain" id="PRO_0000355405" description="Cytochrome b6-f complex subunit 5">
    <location>
        <begin position="1"/>
        <end position="37"/>
    </location>
</feature>
<feature type="transmembrane region" description="Helical" evidence="1">
    <location>
        <begin position="5"/>
        <end position="25"/>
    </location>
</feature>